<proteinExistence type="inferred from homology"/>
<organism>
    <name type="scientific">Mycobacterium sp. (strain KMS)</name>
    <dbReference type="NCBI Taxonomy" id="189918"/>
    <lineage>
        <taxon>Bacteria</taxon>
        <taxon>Bacillati</taxon>
        <taxon>Actinomycetota</taxon>
        <taxon>Actinomycetes</taxon>
        <taxon>Mycobacteriales</taxon>
        <taxon>Mycobacteriaceae</taxon>
        <taxon>Mycobacterium</taxon>
    </lineage>
</organism>
<sequence length="336" mass="35464">MNLAIIAGDGIGPEVIGEAVKVLDAVLPEVEKTTYDLGARRYHATGEILPDSVLEELKVHDAILLGAIGDPSVPSGVLERGLLLRIRFALDHHINLRPAKLYSGVTGPLAGNPEIDFVVVREGTEGPYTGTGGAIRVGTPHEVATEVSLNTAFGVRRVVEDAFRRAQQRRKHLTLVHKNNVLTFAGALWWRTVQEVGAEYPDVEIAYQHVDSAMIHIVTDPGRFDVIVTDNLFGDIVTDLAAAVCGGIGLAASGNIDATRTNPSMFEPVHGSAPDIAGQGIADPTAAIMSVALLLAHVGETDAAARVDKAVEAHLSSRGDQELGTAAVGDRIVGLL</sequence>
<feature type="chain" id="PRO_1000063874" description="3-isopropylmalate dehydrogenase">
    <location>
        <begin position="1"/>
        <end position="336"/>
    </location>
</feature>
<feature type="binding site" evidence="1">
    <location>
        <position position="87"/>
    </location>
    <ligand>
        <name>substrate</name>
    </ligand>
</feature>
<feature type="binding site" evidence="1">
    <location>
        <position position="97"/>
    </location>
    <ligand>
        <name>substrate</name>
    </ligand>
</feature>
<feature type="binding site" evidence="1">
    <location>
        <position position="121"/>
    </location>
    <ligand>
        <name>substrate</name>
    </ligand>
</feature>
<feature type="binding site" evidence="1">
    <location>
        <position position="211"/>
    </location>
    <ligand>
        <name>Mg(2+)</name>
        <dbReference type="ChEBI" id="CHEBI:18420"/>
    </ligand>
</feature>
<feature type="binding site" evidence="1">
    <location>
        <position position="211"/>
    </location>
    <ligand>
        <name>substrate</name>
    </ligand>
</feature>
<feature type="binding site" evidence="1">
    <location>
        <position position="235"/>
    </location>
    <ligand>
        <name>Mg(2+)</name>
        <dbReference type="ChEBI" id="CHEBI:18420"/>
    </ligand>
</feature>
<feature type="binding site" evidence="1">
    <location>
        <position position="239"/>
    </location>
    <ligand>
        <name>Mg(2+)</name>
        <dbReference type="ChEBI" id="CHEBI:18420"/>
    </ligand>
</feature>
<feature type="binding site" evidence="1">
    <location>
        <begin position="271"/>
        <end position="283"/>
    </location>
    <ligand>
        <name>NAD(+)</name>
        <dbReference type="ChEBI" id="CHEBI:57540"/>
    </ligand>
</feature>
<feature type="site" description="Important for catalysis" evidence="1">
    <location>
        <position position="128"/>
    </location>
</feature>
<feature type="site" description="Important for catalysis" evidence="1">
    <location>
        <position position="178"/>
    </location>
</feature>
<protein>
    <recommendedName>
        <fullName evidence="1">3-isopropylmalate dehydrogenase</fullName>
        <ecNumber evidence="1">1.1.1.85</ecNumber>
    </recommendedName>
    <alternativeName>
        <fullName evidence="1">3-IPM-DH</fullName>
    </alternativeName>
    <alternativeName>
        <fullName evidence="1">Beta-IPM dehydrogenase</fullName>
        <shortName evidence="1">IMDH</shortName>
    </alternativeName>
</protein>
<gene>
    <name evidence="1" type="primary">leuB</name>
    <name type="ordered locus">Mkms_1957</name>
</gene>
<name>LEU3_MYCSK</name>
<accession>A1UE98</accession>
<reference key="1">
    <citation type="submission" date="2006-12" db="EMBL/GenBank/DDBJ databases">
        <title>Complete sequence of chromosome of Mycobacterium sp. KMS.</title>
        <authorList>
            <consortium name="US DOE Joint Genome Institute"/>
            <person name="Copeland A."/>
            <person name="Lucas S."/>
            <person name="Lapidus A."/>
            <person name="Barry K."/>
            <person name="Detter J.C."/>
            <person name="Glavina del Rio T."/>
            <person name="Hammon N."/>
            <person name="Israni S."/>
            <person name="Dalin E."/>
            <person name="Tice H."/>
            <person name="Pitluck S."/>
            <person name="Kiss H."/>
            <person name="Brettin T."/>
            <person name="Bruce D."/>
            <person name="Han C."/>
            <person name="Tapia R."/>
            <person name="Gilna P."/>
            <person name="Schmutz J."/>
            <person name="Larimer F."/>
            <person name="Land M."/>
            <person name="Hauser L."/>
            <person name="Kyrpides N."/>
            <person name="Mikhailova N."/>
            <person name="Miller C.D."/>
            <person name="Richardson P."/>
        </authorList>
    </citation>
    <scope>NUCLEOTIDE SEQUENCE [LARGE SCALE GENOMIC DNA]</scope>
    <source>
        <strain>KMS</strain>
    </source>
</reference>
<evidence type="ECO:0000255" key="1">
    <source>
        <dbReference type="HAMAP-Rule" id="MF_01035"/>
    </source>
</evidence>
<comment type="function">
    <text evidence="1">Catalyzes the oxidation of 3-carboxy-2-hydroxy-4-methylpentanoate (3-isopropylmalate) to 3-carboxy-4-methyl-2-oxopentanoate. The product decarboxylates to 4-methyl-2 oxopentanoate.</text>
</comment>
<comment type="catalytic activity">
    <reaction evidence="1">
        <text>(2R,3S)-3-isopropylmalate + NAD(+) = 4-methyl-2-oxopentanoate + CO2 + NADH</text>
        <dbReference type="Rhea" id="RHEA:32271"/>
        <dbReference type="ChEBI" id="CHEBI:16526"/>
        <dbReference type="ChEBI" id="CHEBI:17865"/>
        <dbReference type="ChEBI" id="CHEBI:35121"/>
        <dbReference type="ChEBI" id="CHEBI:57540"/>
        <dbReference type="ChEBI" id="CHEBI:57945"/>
        <dbReference type="EC" id="1.1.1.85"/>
    </reaction>
</comment>
<comment type="cofactor">
    <cofactor evidence="1">
        <name>Mg(2+)</name>
        <dbReference type="ChEBI" id="CHEBI:18420"/>
    </cofactor>
    <cofactor evidence="1">
        <name>Mn(2+)</name>
        <dbReference type="ChEBI" id="CHEBI:29035"/>
    </cofactor>
    <text evidence="1">Binds 1 Mg(2+) or Mn(2+) ion per subunit.</text>
</comment>
<comment type="pathway">
    <text evidence="1">Amino-acid biosynthesis; L-leucine biosynthesis; L-leucine from 3-methyl-2-oxobutanoate: step 3/4.</text>
</comment>
<comment type="subunit">
    <text evidence="1">Homodimer.</text>
</comment>
<comment type="subcellular location">
    <subcellularLocation>
        <location evidence="1">Cytoplasm</location>
    </subcellularLocation>
</comment>
<comment type="similarity">
    <text evidence="1">Belongs to the isocitrate and isopropylmalate dehydrogenases family. LeuB type 2 subfamily.</text>
</comment>
<dbReference type="EC" id="1.1.1.85" evidence="1"/>
<dbReference type="EMBL" id="CP000518">
    <property type="protein sequence ID" value="ABL91156.1"/>
    <property type="molecule type" value="Genomic_DNA"/>
</dbReference>
<dbReference type="SMR" id="A1UE98"/>
<dbReference type="STRING" id="189918.Mkms_1957"/>
<dbReference type="KEGG" id="mkm:Mkms_1957"/>
<dbReference type="HOGENOM" id="CLU_031953_0_1_11"/>
<dbReference type="OrthoDB" id="5289857at2"/>
<dbReference type="UniPathway" id="UPA00048">
    <property type="reaction ID" value="UER00072"/>
</dbReference>
<dbReference type="GO" id="GO:0005737">
    <property type="term" value="C:cytoplasm"/>
    <property type="evidence" value="ECO:0007669"/>
    <property type="project" value="UniProtKB-SubCell"/>
</dbReference>
<dbReference type="GO" id="GO:0003862">
    <property type="term" value="F:3-isopropylmalate dehydrogenase activity"/>
    <property type="evidence" value="ECO:0007669"/>
    <property type="project" value="UniProtKB-UniRule"/>
</dbReference>
<dbReference type="GO" id="GO:0000287">
    <property type="term" value="F:magnesium ion binding"/>
    <property type="evidence" value="ECO:0007669"/>
    <property type="project" value="InterPro"/>
</dbReference>
<dbReference type="GO" id="GO:0051287">
    <property type="term" value="F:NAD binding"/>
    <property type="evidence" value="ECO:0007669"/>
    <property type="project" value="InterPro"/>
</dbReference>
<dbReference type="GO" id="GO:0009098">
    <property type="term" value="P:L-leucine biosynthetic process"/>
    <property type="evidence" value="ECO:0007669"/>
    <property type="project" value="UniProtKB-UniRule"/>
</dbReference>
<dbReference type="Gene3D" id="3.40.718.10">
    <property type="entry name" value="Isopropylmalate Dehydrogenase"/>
    <property type="match status" value="1"/>
</dbReference>
<dbReference type="HAMAP" id="MF_01035">
    <property type="entry name" value="LeuB_type2"/>
    <property type="match status" value="1"/>
</dbReference>
<dbReference type="InterPro" id="IPR050501">
    <property type="entry name" value="ICDH/IPMDH"/>
</dbReference>
<dbReference type="InterPro" id="IPR019818">
    <property type="entry name" value="IsoCit/isopropylmalate_DH_CS"/>
</dbReference>
<dbReference type="InterPro" id="IPR024084">
    <property type="entry name" value="IsoPropMal-DH-like_dom"/>
</dbReference>
<dbReference type="InterPro" id="IPR023698">
    <property type="entry name" value="LeuB_actb"/>
</dbReference>
<dbReference type="NCBIfam" id="NF002898">
    <property type="entry name" value="PRK03437.1"/>
    <property type="match status" value="1"/>
</dbReference>
<dbReference type="PANTHER" id="PTHR43275">
    <property type="entry name" value="D-MALATE DEHYDROGENASE [DECARBOXYLATING]"/>
    <property type="match status" value="1"/>
</dbReference>
<dbReference type="PANTHER" id="PTHR43275:SF1">
    <property type="entry name" value="D-MALATE DEHYDROGENASE [DECARBOXYLATING]"/>
    <property type="match status" value="1"/>
</dbReference>
<dbReference type="Pfam" id="PF00180">
    <property type="entry name" value="Iso_dh"/>
    <property type="match status" value="1"/>
</dbReference>
<dbReference type="SMART" id="SM01329">
    <property type="entry name" value="Iso_dh"/>
    <property type="match status" value="1"/>
</dbReference>
<dbReference type="SUPFAM" id="SSF53659">
    <property type="entry name" value="Isocitrate/Isopropylmalate dehydrogenase-like"/>
    <property type="match status" value="1"/>
</dbReference>
<dbReference type="PROSITE" id="PS00470">
    <property type="entry name" value="IDH_IMDH"/>
    <property type="match status" value="1"/>
</dbReference>
<keyword id="KW-0028">Amino-acid biosynthesis</keyword>
<keyword id="KW-0100">Branched-chain amino acid biosynthesis</keyword>
<keyword id="KW-0963">Cytoplasm</keyword>
<keyword id="KW-0432">Leucine biosynthesis</keyword>
<keyword id="KW-0460">Magnesium</keyword>
<keyword id="KW-0464">Manganese</keyword>
<keyword id="KW-0479">Metal-binding</keyword>
<keyword id="KW-0520">NAD</keyword>
<keyword id="KW-0560">Oxidoreductase</keyword>